<evidence type="ECO:0000255" key="1">
    <source>
        <dbReference type="PROSITE-ProRule" id="PRU00227"/>
    </source>
</evidence>
<evidence type="ECO:0000256" key="2">
    <source>
        <dbReference type="SAM" id="MobiDB-lite"/>
    </source>
</evidence>
<evidence type="ECO:0000303" key="3">
    <source>
    </source>
</evidence>
<evidence type="ECO:0000305" key="4">
    <source>
    </source>
</evidence>
<keyword id="KW-0238">DNA-binding</keyword>
<keyword id="KW-0479">Metal-binding</keyword>
<keyword id="KW-0539">Nucleus</keyword>
<keyword id="KW-1185">Reference proteome</keyword>
<keyword id="KW-0804">Transcription</keyword>
<keyword id="KW-0805">Transcription regulation</keyword>
<keyword id="KW-0862">Zinc</keyword>
<organism>
    <name type="scientific">Pestalotiopsis fici (strain W106-1 / CGMCC3.15140)</name>
    <dbReference type="NCBI Taxonomy" id="1229662"/>
    <lineage>
        <taxon>Eukaryota</taxon>
        <taxon>Fungi</taxon>
        <taxon>Dikarya</taxon>
        <taxon>Ascomycota</taxon>
        <taxon>Pezizomycotina</taxon>
        <taxon>Sordariomycetes</taxon>
        <taxon>Xylariomycetidae</taxon>
        <taxon>Amphisphaeriales</taxon>
        <taxon>Sporocadaceae</taxon>
        <taxon>Pestalotiopsis</taxon>
    </lineage>
</organism>
<dbReference type="EMBL" id="KC145148">
    <property type="protein sequence ID" value="AGO59037.1"/>
    <property type="molecule type" value="Genomic_DNA"/>
</dbReference>
<dbReference type="EMBL" id="KI912116">
    <property type="protein sequence ID" value="ETS76959.1"/>
    <property type="molecule type" value="Genomic_DNA"/>
</dbReference>
<dbReference type="RefSeq" id="XP_007837605.1">
    <property type="nucleotide sequence ID" value="XM_007839414.1"/>
</dbReference>
<dbReference type="SMR" id="A0A067XMN9"/>
<dbReference type="STRING" id="1229662.A0A067XMN9"/>
<dbReference type="GeneID" id="19275846"/>
<dbReference type="KEGG" id="pfy:PFICI_10833"/>
<dbReference type="eggNOG" id="ENOG502SUW5">
    <property type="taxonomic scope" value="Eukaryota"/>
</dbReference>
<dbReference type="InParanoid" id="A0A067XMN9"/>
<dbReference type="OMA" id="VRCTKER"/>
<dbReference type="OrthoDB" id="2943660at2759"/>
<dbReference type="Proteomes" id="UP000030651">
    <property type="component" value="Unassembled WGS sequence"/>
</dbReference>
<dbReference type="GO" id="GO:0005634">
    <property type="term" value="C:nucleus"/>
    <property type="evidence" value="ECO:0007669"/>
    <property type="project" value="UniProtKB-SubCell"/>
</dbReference>
<dbReference type="GO" id="GO:0003677">
    <property type="term" value="F:DNA binding"/>
    <property type="evidence" value="ECO:0007669"/>
    <property type="project" value="UniProtKB-KW"/>
</dbReference>
<dbReference type="GO" id="GO:0000981">
    <property type="term" value="F:DNA-binding transcription factor activity, RNA polymerase II-specific"/>
    <property type="evidence" value="ECO:0007669"/>
    <property type="project" value="InterPro"/>
</dbReference>
<dbReference type="GO" id="GO:0008270">
    <property type="term" value="F:zinc ion binding"/>
    <property type="evidence" value="ECO:0007669"/>
    <property type="project" value="InterPro"/>
</dbReference>
<dbReference type="GO" id="GO:0045122">
    <property type="term" value="P:aflatoxin biosynthetic process"/>
    <property type="evidence" value="ECO:0007669"/>
    <property type="project" value="InterPro"/>
</dbReference>
<dbReference type="CDD" id="cd00067">
    <property type="entry name" value="GAL4"/>
    <property type="match status" value="1"/>
</dbReference>
<dbReference type="Gene3D" id="4.10.240.10">
    <property type="entry name" value="Zn(2)-C6 fungal-type DNA-binding domain"/>
    <property type="match status" value="1"/>
</dbReference>
<dbReference type="InterPro" id="IPR013700">
    <property type="entry name" value="AflR"/>
</dbReference>
<dbReference type="InterPro" id="IPR050675">
    <property type="entry name" value="OAF3"/>
</dbReference>
<dbReference type="InterPro" id="IPR036864">
    <property type="entry name" value="Zn2-C6_fun-type_DNA-bd_sf"/>
</dbReference>
<dbReference type="InterPro" id="IPR001138">
    <property type="entry name" value="Zn2Cys6_DnaBD"/>
</dbReference>
<dbReference type="PANTHER" id="PTHR31069:SF31">
    <property type="entry name" value="MONODICTYPHENONE CLUSTER TRANSCRIPTION FACTOR-RELATED"/>
    <property type="match status" value="1"/>
</dbReference>
<dbReference type="PANTHER" id="PTHR31069">
    <property type="entry name" value="OLEATE-ACTIVATED TRANSCRIPTION FACTOR 1-RELATED"/>
    <property type="match status" value="1"/>
</dbReference>
<dbReference type="Pfam" id="PF08493">
    <property type="entry name" value="AflR"/>
    <property type="match status" value="1"/>
</dbReference>
<dbReference type="Pfam" id="PF00172">
    <property type="entry name" value="Zn_clus"/>
    <property type="match status" value="1"/>
</dbReference>
<dbReference type="PRINTS" id="PR00755">
    <property type="entry name" value="AFLATOXINBRP"/>
</dbReference>
<dbReference type="SMART" id="SM00066">
    <property type="entry name" value="GAL4"/>
    <property type="match status" value="1"/>
</dbReference>
<dbReference type="SUPFAM" id="SSF57701">
    <property type="entry name" value="Zn2/Cys6 DNA-binding domain"/>
    <property type="match status" value="1"/>
</dbReference>
<dbReference type="PROSITE" id="PS00463">
    <property type="entry name" value="ZN2_CY6_FUNGAL_1"/>
    <property type="match status" value="1"/>
</dbReference>
<dbReference type="PROSITE" id="PS50048">
    <property type="entry name" value="ZN2_CY6_FUNGAL_2"/>
    <property type="match status" value="1"/>
</dbReference>
<feature type="chain" id="PRO_0000443053" description="Pestheic acid cluster transcriptional regulator 2">
    <location>
        <begin position="1"/>
        <end position="444"/>
    </location>
</feature>
<feature type="DNA-binding region" description="Zn(2)-C6 fungal-type" evidence="1">
    <location>
        <begin position="36"/>
        <end position="63"/>
    </location>
</feature>
<feature type="region of interest" description="Disordered" evidence="2">
    <location>
        <begin position="1"/>
        <end position="31"/>
    </location>
</feature>
<feature type="region of interest" description="Disordered" evidence="2">
    <location>
        <begin position="326"/>
        <end position="348"/>
    </location>
</feature>
<feature type="compositionally biased region" description="Polar residues" evidence="2">
    <location>
        <begin position="1"/>
        <end position="22"/>
    </location>
</feature>
<feature type="compositionally biased region" description="Polar residues" evidence="2">
    <location>
        <begin position="331"/>
        <end position="348"/>
    </location>
</feature>
<sequence length="444" mass="48761">MEAADPNNNLTITSPSTLLSNPTQPPAQPLKLRDSCHACASSKVKCHKEKPTCSRCRKRGITCEYFAHRRPGRKQENRAKDTTNHVERQENTTAVEMLDLNWPAPDFSTQTSIANDNLDVFHDIFVPPDQLNNGLTDFTIDFDDFDIQSDPAEIASLPDTSSLESMFVTSPTAPTDTITPNVITPNVGLSVLEGLPDTTHHTQAINLASYIQTPPTEKTPDSRIKHLEENKDPCMTRALSFLTQLSESTSRICKTSETGCSGTNKKSLPESLDGIIAENRRLLEAMSNILQCRCSEDDDLLCIQAIVASKILNLYASAIEIKPSPARVGSGVSTHTTAGQYEPQVEQQLSTRTHPQLASGRDPIRMAAQSVLGELHRVQRLLSQMLQKSKDNETMRRKGSENGLRAVADKVPLTSGVSFGSIEADLRYKLGKLSIEIITLLRGA</sequence>
<proteinExistence type="inferred from homology"/>
<reference key="1">
    <citation type="journal article" date="2014" name="ChemBioChem">
        <title>Identification of the first diphenyl ether gene cluster for pestheic acid biosynthesis in plant endophyte Pestalotiopsis fici.</title>
        <authorList>
            <person name="Xu X."/>
            <person name="Liu L."/>
            <person name="Zhang F."/>
            <person name="Wang W."/>
            <person name="Li J."/>
            <person name="Guo L."/>
            <person name="Che Y."/>
            <person name="Liu G."/>
        </authorList>
    </citation>
    <scope>NUCLEOTIDE SEQUENCE [GENOMIC DNA]</scope>
    <scope>FUNCTION</scope>
    <source>
        <strain>W106-1 / CGMCC3.15140</strain>
    </source>
</reference>
<reference key="2">
    <citation type="journal article" date="2015" name="BMC Genomics">
        <title>Genomic and transcriptomic analysis of the endophytic fungus Pestalotiopsis fici reveals its lifestyle and high potential for synthesis of natural products.</title>
        <authorList>
            <person name="Wang X."/>
            <person name="Zhang X."/>
            <person name="Liu L."/>
            <person name="Xiang M."/>
            <person name="Wang W."/>
            <person name="Sun X."/>
            <person name="Che Y."/>
            <person name="Guo L."/>
            <person name="Liu G."/>
            <person name="Guo L."/>
            <person name="Wang C."/>
            <person name="Yin W.B."/>
            <person name="Stadler M."/>
            <person name="Zhang X."/>
            <person name="Liu X."/>
        </authorList>
    </citation>
    <scope>NUCLEOTIDE SEQUENCE [LARGE SCALE GENOMIC DNA]</scope>
    <source>
        <strain>W106-1 / CGMCC3.15140</strain>
    </source>
</reference>
<name>PTAR2_PESFW</name>
<gene>
    <name evidence="3" type="primary">ptaR2</name>
    <name type="ORF">PFICI_10833</name>
</gene>
<comment type="function">
    <text evidence="4">Transcription factor that, with ptaR1 and ptaR3, coregulates the expression of the gene cluster that mediates the biosynthesis of pestheic acid, a diphenyl ether which is a biosynthetic precursor of the unique chloropupukeananes (PubMed:24302702).</text>
</comment>
<comment type="subcellular location">
    <subcellularLocation>
        <location evidence="1">Nucleus</location>
    </subcellularLocation>
</comment>
<protein>
    <recommendedName>
        <fullName evidence="3">Pestheic acid cluster transcriptional regulator 2</fullName>
    </recommendedName>
</protein>
<accession>A0A067XMN9</accession>
<accession>W3WT12</accession>